<accession>Q42963</accession>
<accession>A0A1S3Y3K4</accession>
<accession>Q9SEH6</accession>
<name>PMT1_TOBAC</name>
<keyword id="KW-0017">Alkaloid metabolism</keyword>
<keyword id="KW-0489">Methyltransferase</keyword>
<keyword id="KW-0620">Polyamine biosynthesis</keyword>
<keyword id="KW-0661">Putrescine biosynthesis</keyword>
<keyword id="KW-1185">Reference proteome</keyword>
<keyword id="KW-0949">S-adenosyl-L-methionine</keyword>
<keyword id="KW-0808">Transferase</keyword>
<proteinExistence type="evidence at protein level"/>
<comment type="function">
    <text evidence="8 9 10 11">Involved in the biosynthesis of pyridine alkaloid natural products, leading mainly to the production of anabasine, anatabine, nicotine and nornicotine, effective deterrents against herbivores with antiparasitic and pesticide properties (neurotoxins); nornicotine serves as the precursor in the synthesis of the carcinogen compound N'-nitrosonornicotine (NNN) (PubMed:31276744, PubMed:34095742, PubMed:8038607). Methyltransferase that mediates the conversion of putrescine to N-methylputrescine (PubMed:8038607, PubMed:9620262). Promotes leaves ripening (PubMed:34095742).</text>
</comment>
<comment type="catalytic activity">
    <reaction evidence="2 10 11">
        <text>putrescine + S-adenosyl-L-methionine = N-methylputrescine + S-adenosyl-L-homocysteine + H(+)</text>
        <dbReference type="Rhea" id="RHEA:15037"/>
        <dbReference type="ChEBI" id="CHEBI:15378"/>
        <dbReference type="ChEBI" id="CHEBI:57856"/>
        <dbReference type="ChEBI" id="CHEBI:58039"/>
        <dbReference type="ChEBI" id="CHEBI:59789"/>
        <dbReference type="ChEBI" id="CHEBI:326268"/>
        <dbReference type="EC" id="2.1.1.53"/>
    </reaction>
</comment>
<comment type="pathway">
    <text evidence="10">Alkaloid biosynthesis; nicotine biosynthesis.</text>
</comment>
<comment type="tissue specificity">
    <text evidence="4 10">Predominantly expressed in roots.</text>
</comment>
<comment type="induction">
    <text evidence="4 5 7 10 12">Down-regulated by auxin (PubMed:8038607). Accumulates upon the removal of flower heads and young leaves (PubMed:10598105, PubMed:8038607). Triggered by jasmonic acid (MeJA) (PubMed:10965939, PubMed:15604714, PubMed:9869416).</text>
</comment>
<comment type="disruption phenotype">
    <text evidence="6 9">Accumulation of anatabine at the expense of nicotine (PubMed:14756309). Plants suppressed for PMT1, PMT2, PMT3 and PMT4 exhibit strongly reduced nicotine levels but accumulate polyamines in roots, and have an impaired leaf maturation phenotype at harvest (PubMed:34095742).</text>
</comment>
<comment type="similarity">
    <text evidence="2">Belongs to the class I-like SAM-binding methyltransferase superfamily. Putrescine methyltransferase family.</text>
</comment>
<evidence type="ECO:0000255" key="1">
    <source>
        <dbReference type="PROSITE-ProRule" id="PRU00354"/>
    </source>
</evidence>
<evidence type="ECO:0000255" key="2">
    <source>
        <dbReference type="PROSITE-ProRule" id="PRU00947"/>
    </source>
</evidence>
<evidence type="ECO:0000256" key="3">
    <source>
        <dbReference type="SAM" id="MobiDB-lite"/>
    </source>
</evidence>
<evidence type="ECO:0000269" key="4">
    <source>
    </source>
</evidence>
<evidence type="ECO:0000269" key="5">
    <source>
    </source>
</evidence>
<evidence type="ECO:0000269" key="6">
    <source>
    </source>
</evidence>
<evidence type="ECO:0000269" key="7">
    <source>
    </source>
</evidence>
<evidence type="ECO:0000269" key="8">
    <source>
    </source>
</evidence>
<evidence type="ECO:0000269" key="9">
    <source>
    </source>
</evidence>
<evidence type="ECO:0000269" key="10">
    <source>
    </source>
</evidence>
<evidence type="ECO:0000269" key="11">
    <source>
    </source>
</evidence>
<evidence type="ECO:0000269" key="12">
    <source>
    </source>
</evidence>
<evidence type="ECO:0000303" key="13">
    <source>
    </source>
</evidence>
<evidence type="ECO:0000303" key="14">
    <source>
    </source>
</evidence>
<evidence type="ECO:0000312" key="15">
    <source>
        <dbReference type="RefSeq" id="XP_016446557.1"/>
    </source>
</evidence>
<dbReference type="EC" id="2.1.1.53" evidence="2 10 11"/>
<dbReference type="EMBL" id="D28506">
    <property type="protein sequence ID" value="BAA05867.1"/>
    <property type="molecule type" value="mRNA"/>
</dbReference>
<dbReference type="EMBL" id="AF126810">
    <property type="protein sequence ID" value="AAF14879.1"/>
    <property type="molecule type" value="Genomic_DNA"/>
</dbReference>
<dbReference type="PIR" id="T03681">
    <property type="entry name" value="T03681"/>
</dbReference>
<dbReference type="RefSeq" id="NP_001312037.1">
    <property type="nucleotide sequence ID" value="NM_001325108.1"/>
</dbReference>
<dbReference type="RefSeq" id="XP_016446557.1">
    <property type="nucleotide sequence ID" value="XM_016591071.1"/>
</dbReference>
<dbReference type="SMR" id="Q42963"/>
<dbReference type="STRING" id="4097.A0A1S3Y3K4"/>
<dbReference type="PaxDb" id="4097-Q42963"/>
<dbReference type="GeneID" id="107771646"/>
<dbReference type="KEGG" id="nta:107771646"/>
<dbReference type="OMA" id="VCINDER"/>
<dbReference type="OrthoDB" id="38125at2759"/>
<dbReference type="BRENDA" id="2.1.1.53">
    <property type="organism ID" value="3645"/>
</dbReference>
<dbReference type="UniPathway" id="UPA00107"/>
<dbReference type="Proteomes" id="UP000084051">
    <property type="component" value="Unplaced"/>
</dbReference>
<dbReference type="GO" id="GO:0005829">
    <property type="term" value="C:cytosol"/>
    <property type="evidence" value="ECO:0000318"/>
    <property type="project" value="GO_Central"/>
</dbReference>
<dbReference type="GO" id="GO:0030750">
    <property type="term" value="F:putrescine N-methyltransferase activity"/>
    <property type="evidence" value="ECO:0000314"/>
    <property type="project" value="UniProtKB"/>
</dbReference>
<dbReference type="GO" id="GO:0009820">
    <property type="term" value="P:alkaloid metabolic process"/>
    <property type="evidence" value="ECO:0007669"/>
    <property type="project" value="UniProtKB-KW"/>
</dbReference>
<dbReference type="GO" id="GO:0032259">
    <property type="term" value="P:methylation"/>
    <property type="evidence" value="ECO:0007669"/>
    <property type="project" value="UniProtKB-KW"/>
</dbReference>
<dbReference type="GO" id="GO:0042179">
    <property type="term" value="P:nicotine biosynthetic process"/>
    <property type="evidence" value="ECO:0007669"/>
    <property type="project" value="UniProtKB-UniPathway"/>
</dbReference>
<dbReference type="GO" id="GO:0009446">
    <property type="term" value="P:putrescine biosynthetic process"/>
    <property type="evidence" value="ECO:0007669"/>
    <property type="project" value="UniProtKB-KW"/>
</dbReference>
<dbReference type="GO" id="GO:0009733">
    <property type="term" value="P:response to auxin"/>
    <property type="evidence" value="ECO:0000314"/>
    <property type="project" value="UniProtKB"/>
</dbReference>
<dbReference type="GO" id="GO:0009753">
    <property type="term" value="P:response to jasmonic acid"/>
    <property type="evidence" value="ECO:0000270"/>
    <property type="project" value="UniProtKB"/>
</dbReference>
<dbReference type="GO" id="GO:0008295">
    <property type="term" value="P:spermidine biosynthetic process"/>
    <property type="evidence" value="ECO:0000318"/>
    <property type="project" value="GO_Central"/>
</dbReference>
<dbReference type="CDD" id="cd02440">
    <property type="entry name" value="AdoMet_MTases"/>
    <property type="match status" value="1"/>
</dbReference>
<dbReference type="FunFam" id="2.30.140.10:FF:000001">
    <property type="entry name" value="SPE3p Spermidine synthase"/>
    <property type="match status" value="1"/>
</dbReference>
<dbReference type="FunFam" id="3.40.50.150:FF:000013">
    <property type="entry name" value="Spermidine synthase"/>
    <property type="match status" value="1"/>
</dbReference>
<dbReference type="Gene3D" id="2.30.140.10">
    <property type="entry name" value="Spermidine synthase, tetramerisation domain"/>
    <property type="match status" value="1"/>
</dbReference>
<dbReference type="Gene3D" id="3.40.50.150">
    <property type="entry name" value="Vaccinia Virus protein VP39"/>
    <property type="match status" value="1"/>
</dbReference>
<dbReference type="HAMAP" id="MF_00198">
    <property type="entry name" value="Spermidine_synth"/>
    <property type="match status" value="1"/>
</dbReference>
<dbReference type="InterPro" id="IPR030374">
    <property type="entry name" value="PABS"/>
</dbReference>
<dbReference type="InterPro" id="IPR030373">
    <property type="entry name" value="PABS_CS"/>
</dbReference>
<dbReference type="InterPro" id="IPR025803">
    <property type="entry name" value="Putrescine_N-MeTfrase"/>
</dbReference>
<dbReference type="InterPro" id="IPR029063">
    <property type="entry name" value="SAM-dependent_MTases_sf"/>
</dbReference>
<dbReference type="InterPro" id="IPR001045">
    <property type="entry name" value="Spermi_synthase"/>
</dbReference>
<dbReference type="InterPro" id="IPR035246">
    <property type="entry name" value="Spermidine_synt_N"/>
</dbReference>
<dbReference type="InterPro" id="IPR037163">
    <property type="entry name" value="Spermidine_synt_N_sf"/>
</dbReference>
<dbReference type="NCBIfam" id="NF002010">
    <property type="entry name" value="PRK00811.1"/>
    <property type="match status" value="1"/>
</dbReference>
<dbReference type="NCBIfam" id="TIGR00417">
    <property type="entry name" value="speE"/>
    <property type="match status" value="1"/>
</dbReference>
<dbReference type="PANTHER" id="PTHR11558:SF53">
    <property type="entry name" value="PUTRESCINE N-METHYLTRANSFERASE 1"/>
    <property type="match status" value="1"/>
</dbReference>
<dbReference type="PANTHER" id="PTHR11558">
    <property type="entry name" value="SPERMIDINE/SPERMINE SYNTHASE"/>
    <property type="match status" value="1"/>
</dbReference>
<dbReference type="Pfam" id="PF17284">
    <property type="entry name" value="Spermine_synt_N"/>
    <property type="match status" value="1"/>
</dbReference>
<dbReference type="Pfam" id="PF01564">
    <property type="entry name" value="Spermine_synth"/>
    <property type="match status" value="1"/>
</dbReference>
<dbReference type="SUPFAM" id="SSF53335">
    <property type="entry name" value="S-adenosyl-L-methionine-dependent methyltransferases"/>
    <property type="match status" value="1"/>
</dbReference>
<dbReference type="PROSITE" id="PS01330">
    <property type="entry name" value="PABS_1"/>
    <property type="match status" value="1"/>
</dbReference>
<dbReference type="PROSITE" id="PS51006">
    <property type="entry name" value="PABS_2"/>
    <property type="match status" value="1"/>
</dbReference>
<dbReference type="PROSITE" id="PS51615">
    <property type="entry name" value="SAM_MT_PUTRESCINE"/>
    <property type="match status" value="1"/>
</dbReference>
<protein>
    <recommendedName>
        <fullName evidence="13">Putrescine N-methyltransferase 1</fullName>
        <shortName evidence="13">NtPMT1a</shortName>
        <ecNumber evidence="2 10 11">2.1.1.53</ecNumber>
    </recommendedName>
    <alternativeName>
        <fullName evidence="14">A411</fullName>
    </alternativeName>
</protein>
<reference key="1">
    <citation type="journal article" date="1994" name="Plant Cell">
        <title>Gene expression in tobacco low-nicotine mutants.</title>
        <authorList>
            <person name="Hibi N."/>
            <person name="Higashiguchi S."/>
            <person name="Hashimoto T."/>
            <person name="Yamada Y."/>
        </authorList>
    </citation>
    <scope>NUCLEOTIDE SEQUENCE [MRNA]</scope>
    <scope>FUNCTION</scope>
    <scope>DISRUPTION PHENOTYPE</scope>
    <scope>CATALYTIC ACTIVITY</scope>
    <scope>PATHWAY</scope>
    <scope>TISSUE SPECIFICITY</scope>
    <scope>REPRESSION BY AUXIN</scope>
    <scope>INDUCTION BY YOUNG AERIAL TISSUES REMOVAL</scope>
    <source>
        <strain>cv. Burley 21</strain>
        <tissue>Root</tissue>
    </source>
</reference>
<reference key="2">
    <citation type="journal article" date="1999" name="Plant Mol. Biol.">
        <title>Structure and expression of the gene family encoding putrescine N-methyltransferase in Nicotiana tabacum: new clues to the evolutionary origin of cultivated tobacco.</title>
        <authorList>
            <person name="Riechers D.E."/>
            <person name="Timko M.P."/>
        </authorList>
    </citation>
    <scope>NUCLEOTIDE SEQUENCE [GENOMIC DNA]</scope>
    <scope>TISSUE SPECIFICITY</scope>
    <scope>INDUCTION BY YOUNG AERIAL TISSUES REMOVAL</scope>
    <scope>GENE FAMILY</scope>
    <source>
        <strain>cv. Xanthi</strain>
    </source>
</reference>
<reference key="3">
    <citation type="journal article" date="2014" name="Nat. Commun.">
        <title>The tobacco genome sequence and its comparison with those of tomato and potato.</title>
        <authorList>
            <person name="Sierro N."/>
            <person name="Battey J.N."/>
            <person name="Ouadi S."/>
            <person name="Bakaher N."/>
            <person name="Bovet L."/>
            <person name="Willig A."/>
            <person name="Goepfert S."/>
            <person name="Peitsch M.C."/>
            <person name="Ivanov N.V."/>
        </authorList>
    </citation>
    <scope>NUCLEOTIDE SEQUENCE [LARGE SCALE GENOMIC DNA]</scope>
    <source>
        <strain>cv. TN90</strain>
    </source>
</reference>
<reference key="4">
    <citation type="journal article" date="1998" name="Plant Mol. Biol.">
        <title>Intraspecific variability of the tandem repeats in Nicotiana putrescine N-methyltransferases.</title>
        <authorList>
            <person name="Hashimoto T."/>
            <person name="Shoji T."/>
            <person name="Mihara T."/>
            <person name="Oguri H."/>
            <person name="Tamaki K."/>
            <person name="Suzuki K."/>
            <person name="Yamada Y."/>
        </authorList>
    </citation>
    <scope>FUNCTION</scope>
    <scope>CATALYTIC ACTIVITY</scope>
</reference>
<reference key="5">
    <citation type="journal article" date="1998" name="Plant Mol. Biol.">
        <title>Differential induction by methyl jasmonate of genes encoding ornithine decarboxylase and other enzymes involved in nicotine biosynthesis in tobacco cell cultures.</title>
        <authorList>
            <person name="Imanishi S."/>
            <person name="Hashizume K."/>
            <person name="Nakakita M."/>
            <person name="Kojima H."/>
            <person name="Matsubayashi Y."/>
            <person name="Hashimoto T."/>
            <person name="Sakagami Y."/>
            <person name="Yamada Y."/>
            <person name="Nakamura K."/>
        </authorList>
    </citation>
    <scope>INDUCTION BY JASMONATE</scope>
    <source>
        <strain>cv. Bright Yellow 2</strain>
    </source>
</reference>
<reference key="6">
    <citation type="journal article" date="2000" name="Plant Cell Physiol.">
        <title>Jasmonate induction of putrescine N-methyltransferase genes in the root of Nicotiana sylvestris.</title>
        <authorList>
            <person name="Shoji T."/>
            <person name="Yamada Y."/>
            <person name="Hashimoto T."/>
        </authorList>
    </citation>
    <scope>INDUCTION BY JASMONATE</scope>
    <source>
        <strain>cv. Burley 21</strain>
    </source>
</reference>
<reference key="7">
    <citation type="journal article" date="2003" name="Plant Mol. Biol.">
        <title>Antisense-mediated down-regulation of putrescine N-methyltransferase activity in transgenic Nicotiana tabacum L. can lead to elevated levels of anatabine at the expense of nicotine.</title>
        <authorList>
            <person name="Chintapakorn Y."/>
            <person name="Hamill J.D."/>
        </authorList>
    </citation>
    <scope>DISRUPTION PHENOTYPE</scope>
    <source>
        <strain>cv. NC95</strain>
    </source>
</reference>
<reference key="8">
    <citation type="journal article" date="2004" name="Plant Mol. Biol.">
        <title>Methyl jasmonate induced expression of the tobacco putrescine N -methyltransferase genes requires both G-box and GCC-motif elements.</title>
        <authorList>
            <person name="Xu B."/>
            <person name="Timko M."/>
        </authorList>
    </citation>
    <scope>INDUCTION BY JASMONATE</scope>
    <source>
        <strain>cv. Bright Yellow 2</strain>
    </source>
</reference>
<reference key="9">
    <citation type="journal article" date="2009" name="Phytochemistry">
        <title>Putrescine N-methyltransferase--the start for alkaloids.</title>
        <authorList>
            <person name="Biastoff S."/>
            <person name="Brandt W."/>
            <person name="Draeger B."/>
        </authorList>
    </citation>
    <scope>REVIEW ON PUTRESCINE N-METHYLTRANSFERASE</scope>
</reference>
<reference key="10">
    <citation type="journal article" date="2013" name="Phytochemistry">
        <title>Molecular genetics of alkaloid biosynthesis in Nicotiana tabacum.</title>
        <authorList>
            <person name="Dewey R.E."/>
            <person name="Xie J."/>
        </authorList>
    </citation>
    <scope>REVIEW ON ALKALOID BIOSYNTHESIS IN NICOTIANA TABACUM</scope>
</reference>
<reference key="11">
    <citation type="journal article" date="2015" name="Mol. Genet. Genomics">
        <title>Current status and prospects for the study of Nicotiana genomics, genetics, and nicotine biosynthesis genes.</title>
        <authorList>
            <person name="Wang X."/>
            <person name="Bennetzen J.L."/>
        </authorList>
    </citation>
    <scope>REVIEW ON NICOTINE BIOSYNTHESIS</scope>
</reference>
<reference key="12">
    <citation type="journal article" date="2019" name="Food Chem. Toxicol.">
        <title>Antiparasitic properties of leaf extracts derived from selected Nicotiana species and Nicotiana tabacum varieties.</title>
        <authorList>
            <person name="Schorderet Weber S."/>
            <person name="Kaminski K.P."/>
            <person name="Perret J.-L."/>
            <person name="Leroy P."/>
            <person name="Mazurov A."/>
            <person name="Peitsch M.C."/>
            <person name="Ivanov N.V."/>
            <person name="Hoeng J."/>
        </authorList>
    </citation>
    <scope>FUNCTION</scope>
    <source>
        <strain>cv. Burley Stella</strain>
        <strain>cv. Burley TN90</strain>
        <strain>cv. Virginia ITB 683</strain>
        <strain>cv. Virginia K326</strain>
    </source>
</reference>
<reference key="13">
    <citation type="journal article" date="2021" name="Plant Direct">
        <title>Impact of nicotine pathway downregulation on polyamine biosynthesis and leaf ripening in tobacco.</title>
        <authorList>
            <person name="Noelke G."/>
            <person name="Chudobova I."/>
            <person name="Houdelet M."/>
            <person name="Volke D."/>
            <person name="Lusso M."/>
            <person name="Frederick J."/>
            <person name="Kudithipudi C."/>
            <person name="Shen Y."/>
            <person name="Warek U."/>
            <person name="Strickland J.A."/>
            <person name="Xu D."/>
            <person name="Schinkel H."/>
            <person name="Schillberg S."/>
        </authorList>
    </citation>
    <scope>FUNCTION</scope>
    <scope>DISRUPTION PHENOTYPE</scope>
    <source>
        <strain>cv. Burley TN90 LC</strain>
    </source>
</reference>
<gene>
    <name evidence="13" type="primary">PMT1</name>
    <name evidence="15" type="ORF">LOC107771646</name>
</gene>
<sequence length="375" mass="41142">MEVISTNTNGSTIFKNGAIPMNGHQNGTSEHLNGYQNGTSKHQNGHQNGTFEHRNGHQNGTSEQQNGTISHDNGNELLGSSDSIKPGWFSEFSALWPGEAFSLKVEKLLFQGKSDYQDVMLFESATYGKVLTLDGAIQHTENGGFPYTEMIVHLPLGSIPNPKKVLIIGGGIGFTLFEMLRYPSIEKIDIVEIDDVVVDVSRKFFPYLAANFNDPRVTLVLGDGAAFVKAAQAGYYDAIIVDSSDPIGPAKDLFERPFFEAVAKALRPGGVVCTQAESIWLHMHIIKQIIANCRQVFKGSVNYAWTTVPTYPTGVIGYMLCSTEGPEVDFKNPVNPIDKETTQVKSKLGPLKFYNSDIHKAAFILPSFARSMIES</sequence>
<feature type="chain" id="PRO_0000156541" description="Putrescine N-methyltransferase 1">
    <location>
        <begin position="1"/>
        <end position="375"/>
    </location>
</feature>
<feature type="domain" description="PABS" evidence="1">
    <location>
        <begin position="86"/>
        <end position="323"/>
    </location>
</feature>
<feature type="region of interest" description="Disordered" evidence="3">
    <location>
        <begin position="24"/>
        <end position="77"/>
    </location>
</feature>
<feature type="compositionally biased region" description="Polar residues" evidence="3">
    <location>
        <begin position="24"/>
        <end position="50"/>
    </location>
</feature>
<feature type="compositionally biased region" description="Polar residues" evidence="3">
    <location>
        <begin position="57"/>
        <end position="77"/>
    </location>
</feature>
<feature type="active site" description="Proton acceptor" evidence="1 2">
    <location>
        <position position="242"/>
    </location>
</feature>
<feature type="binding site" evidence="2">
    <location>
        <position position="117"/>
    </location>
    <ligand>
        <name>S-adenosyl-L-methionine</name>
        <dbReference type="ChEBI" id="CHEBI:59789"/>
    </ligand>
</feature>
<feature type="binding site" evidence="2">
    <location>
        <position position="192"/>
    </location>
    <ligand>
        <name>S-adenosyl-L-methionine</name>
        <dbReference type="ChEBI" id="CHEBI:59789"/>
    </ligand>
</feature>
<feature type="binding site" evidence="2">
    <location>
        <begin position="223"/>
        <end position="224"/>
    </location>
    <ligand>
        <name>S-adenosyl-L-methionine</name>
        <dbReference type="ChEBI" id="CHEBI:59789"/>
    </ligand>
</feature>
<feature type="binding site" evidence="2">
    <location>
        <position position="311"/>
    </location>
    <ligand>
        <name>S-adenosyl-L-methionine</name>
        <dbReference type="ChEBI" id="CHEBI:59789"/>
    </ligand>
</feature>
<feature type="sequence conflict" description="In Ref. 1; BAA05867." ref="1">
    <original>V</original>
    <variation>A</variation>
    <location>
        <position position="308"/>
    </location>
</feature>
<organism>
    <name type="scientific">Nicotiana tabacum</name>
    <name type="common">Common tobacco</name>
    <dbReference type="NCBI Taxonomy" id="4097"/>
    <lineage>
        <taxon>Eukaryota</taxon>
        <taxon>Viridiplantae</taxon>
        <taxon>Streptophyta</taxon>
        <taxon>Embryophyta</taxon>
        <taxon>Tracheophyta</taxon>
        <taxon>Spermatophyta</taxon>
        <taxon>Magnoliopsida</taxon>
        <taxon>eudicotyledons</taxon>
        <taxon>Gunneridae</taxon>
        <taxon>Pentapetalae</taxon>
        <taxon>asterids</taxon>
        <taxon>lamiids</taxon>
        <taxon>Solanales</taxon>
        <taxon>Solanaceae</taxon>
        <taxon>Nicotianoideae</taxon>
        <taxon>Nicotianeae</taxon>
        <taxon>Nicotiana</taxon>
    </lineage>
</organism>